<reference key="1">
    <citation type="submission" date="2007-02" db="EMBL/GenBank/DDBJ databases">
        <title>Complete sequence of chromosome of Shewanella baltica OS155.</title>
        <authorList>
            <consortium name="US DOE Joint Genome Institute"/>
            <person name="Copeland A."/>
            <person name="Lucas S."/>
            <person name="Lapidus A."/>
            <person name="Barry K."/>
            <person name="Detter J.C."/>
            <person name="Glavina del Rio T."/>
            <person name="Hammon N."/>
            <person name="Israni S."/>
            <person name="Dalin E."/>
            <person name="Tice H."/>
            <person name="Pitluck S."/>
            <person name="Sims D.R."/>
            <person name="Brettin T."/>
            <person name="Bruce D."/>
            <person name="Han C."/>
            <person name="Tapia R."/>
            <person name="Brainard J."/>
            <person name="Schmutz J."/>
            <person name="Larimer F."/>
            <person name="Land M."/>
            <person name="Hauser L."/>
            <person name="Kyrpides N."/>
            <person name="Mikhailova N."/>
            <person name="Brettar I."/>
            <person name="Klappenbach J."/>
            <person name="Konstantinidis K."/>
            <person name="Rodrigues J."/>
            <person name="Tiedje J."/>
            <person name="Richardson P."/>
        </authorList>
    </citation>
    <scope>NUCLEOTIDE SEQUENCE [LARGE SCALE GENOMIC DNA]</scope>
    <source>
        <strain>OS155 / ATCC BAA-1091</strain>
    </source>
</reference>
<dbReference type="EC" id="2.7.8.7" evidence="1"/>
<dbReference type="EMBL" id="CP000563">
    <property type="protein sequence ID" value="ABN60723.1"/>
    <property type="molecule type" value="Genomic_DNA"/>
</dbReference>
<dbReference type="RefSeq" id="WP_011846171.1">
    <property type="nucleotide sequence ID" value="NC_009052.1"/>
</dbReference>
<dbReference type="SMR" id="A3D1W0"/>
<dbReference type="STRING" id="325240.Sbal_1205"/>
<dbReference type="KEGG" id="sbl:Sbal_1205"/>
<dbReference type="HOGENOM" id="CLU_089696_3_1_6"/>
<dbReference type="OrthoDB" id="517356at2"/>
<dbReference type="Proteomes" id="UP000001557">
    <property type="component" value="Chromosome"/>
</dbReference>
<dbReference type="GO" id="GO:0005737">
    <property type="term" value="C:cytoplasm"/>
    <property type="evidence" value="ECO:0007669"/>
    <property type="project" value="UniProtKB-SubCell"/>
</dbReference>
<dbReference type="GO" id="GO:0008897">
    <property type="term" value="F:holo-[acyl-carrier-protein] synthase activity"/>
    <property type="evidence" value="ECO:0007669"/>
    <property type="project" value="UniProtKB-UniRule"/>
</dbReference>
<dbReference type="GO" id="GO:0000287">
    <property type="term" value="F:magnesium ion binding"/>
    <property type="evidence" value="ECO:0007669"/>
    <property type="project" value="UniProtKB-UniRule"/>
</dbReference>
<dbReference type="GO" id="GO:0006633">
    <property type="term" value="P:fatty acid biosynthetic process"/>
    <property type="evidence" value="ECO:0007669"/>
    <property type="project" value="UniProtKB-UniRule"/>
</dbReference>
<dbReference type="FunFam" id="3.90.470.20:FF:000001">
    <property type="entry name" value="Holo-[acyl-carrier-protein] synthase"/>
    <property type="match status" value="1"/>
</dbReference>
<dbReference type="Gene3D" id="3.90.470.20">
    <property type="entry name" value="4'-phosphopantetheinyl transferase domain"/>
    <property type="match status" value="1"/>
</dbReference>
<dbReference type="HAMAP" id="MF_00101">
    <property type="entry name" value="AcpS"/>
    <property type="match status" value="1"/>
</dbReference>
<dbReference type="InterPro" id="IPR008278">
    <property type="entry name" value="4-PPantetheinyl_Trfase_dom"/>
</dbReference>
<dbReference type="InterPro" id="IPR037143">
    <property type="entry name" value="4-PPantetheinyl_Trfase_dom_sf"/>
</dbReference>
<dbReference type="InterPro" id="IPR002582">
    <property type="entry name" value="ACPS"/>
</dbReference>
<dbReference type="InterPro" id="IPR004568">
    <property type="entry name" value="Ppantetheine-prot_Trfase_dom"/>
</dbReference>
<dbReference type="NCBIfam" id="TIGR00516">
    <property type="entry name" value="acpS"/>
    <property type="match status" value="1"/>
</dbReference>
<dbReference type="NCBIfam" id="TIGR00556">
    <property type="entry name" value="pantethn_trn"/>
    <property type="match status" value="1"/>
</dbReference>
<dbReference type="Pfam" id="PF01648">
    <property type="entry name" value="ACPS"/>
    <property type="match status" value="1"/>
</dbReference>
<dbReference type="SUPFAM" id="SSF56214">
    <property type="entry name" value="4'-phosphopantetheinyl transferase"/>
    <property type="match status" value="1"/>
</dbReference>
<feature type="chain" id="PRO_1000008490" description="Holo-[acyl-carrier-protein] synthase">
    <location>
        <begin position="1"/>
        <end position="127"/>
    </location>
</feature>
<feature type="binding site" evidence="1">
    <location>
        <position position="9"/>
    </location>
    <ligand>
        <name>Mg(2+)</name>
        <dbReference type="ChEBI" id="CHEBI:18420"/>
    </ligand>
</feature>
<feature type="binding site" evidence="1">
    <location>
        <position position="58"/>
    </location>
    <ligand>
        <name>Mg(2+)</name>
        <dbReference type="ChEBI" id="CHEBI:18420"/>
    </ligand>
</feature>
<sequence>MAIVGLGTDIVEIERIQAHVARAGDKLAKRVLTEVELAIYTAHSQPSRYLAKRFAAKEAAAKALGTGIGRGVSFQHIHIGNNEDGAPTIHFTEGALARLQQLKATVGHISIADEKSYAIATVIIESQ</sequence>
<accession>A3D1W0</accession>
<proteinExistence type="inferred from homology"/>
<gene>
    <name evidence="1" type="primary">acpS</name>
    <name type="ordered locus">Sbal_1205</name>
</gene>
<keyword id="KW-0963">Cytoplasm</keyword>
<keyword id="KW-0275">Fatty acid biosynthesis</keyword>
<keyword id="KW-0276">Fatty acid metabolism</keyword>
<keyword id="KW-0444">Lipid biosynthesis</keyword>
<keyword id="KW-0443">Lipid metabolism</keyword>
<keyword id="KW-0460">Magnesium</keyword>
<keyword id="KW-0479">Metal-binding</keyword>
<keyword id="KW-1185">Reference proteome</keyword>
<keyword id="KW-0808">Transferase</keyword>
<protein>
    <recommendedName>
        <fullName evidence="1">Holo-[acyl-carrier-protein] synthase</fullName>
        <shortName evidence="1">Holo-ACP synthase</shortName>
        <ecNumber evidence="1">2.7.8.7</ecNumber>
    </recommendedName>
    <alternativeName>
        <fullName evidence="1">4'-phosphopantetheinyl transferase AcpS</fullName>
    </alternativeName>
</protein>
<name>ACPS_SHEB5</name>
<organism>
    <name type="scientific">Shewanella baltica (strain OS155 / ATCC BAA-1091)</name>
    <dbReference type="NCBI Taxonomy" id="325240"/>
    <lineage>
        <taxon>Bacteria</taxon>
        <taxon>Pseudomonadati</taxon>
        <taxon>Pseudomonadota</taxon>
        <taxon>Gammaproteobacteria</taxon>
        <taxon>Alteromonadales</taxon>
        <taxon>Shewanellaceae</taxon>
        <taxon>Shewanella</taxon>
    </lineage>
</organism>
<comment type="function">
    <text evidence="1">Transfers the 4'-phosphopantetheine moiety from coenzyme A to a Ser of acyl-carrier-protein.</text>
</comment>
<comment type="catalytic activity">
    <reaction evidence="1">
        <text>apo-[ACP] + CoA = holo-[ACP] + adenosine 3',5'-bisphosphate + H(+)</text>
        <dbReference type="Rhea" id="RHEA:12068"/>
        <dbReference type="Rhea" id="RHEA-COMP:9685"/>
        <dbReference type="Rhea" id="RHEA-COMP:9690"/>
        <dbReference type="ChEBI" id="CHEBI:15378"/>
        <dbReference type="ChEBI" id="CHEBI:29999"/>
        <dbReference type="ChEBI" id="CHEBI:57287"/>
        <dbReference type="ChEBI" id="CHEBI:58343"/>
        <dbReference type="ChEBI" id="CHEBI:64479"/>
        <dbReference type="EC" id="2.7.8.7"/>
    </reaction>
</comment>
<comment type="cofactor">
    <cofactor evidence="1">
        <name>Mg(2+)</name>
        <dbReference type="ChEBI" id="CHEBI:18420"/>
    </cofactor>
</comment>
<comment type="subcellular location">
    <subcellularLocation>
        <location evidence="1">Cytoplasm</location>
    </subcellularLocation>
</comment>
<comment type="similarity">
    <text evidence="1">Belongs to the P-Pant transferase superfamily. AcpS family.</text>
</comment>
<evidence type="ECO:0000255" key="1">
    <source>
        <dbReference type="HAMAP-Rule" id="MF_00101"/>
    </source>
</evidence>